<gene>
    <name type="primary">rckA</name>
    <name type="synonym">rck1</name>
    <name type="ORF">DDB_G0278737</name>
</gene>
<feature type="chain" id="PRO_0000328051" description="RGS domain-containing serine/threonine-protein kinase A">
    <location>
        <begin position="1"/>
        <end position="1125"/>
    </location>
</feature>
<feature type="domain" description="RGS" evidence="2">
    <location>
        <begin position="487"/>
        <end position="603"/>
    </location>
</feature>
<feature type="domain" description="Protein kinase" evidence="1">
    <location>
        <begin position="842"/>
        <end position="1097"/>
    </location>
</feature>
<feature type="region of interest" description="Disordered" evidence="4">
    <location>
        <begin position="1"/>
        <end position="77"/>
    </location>
</feature>
<feature type="region of interest" description="Disordered" evidence="4">
    <location>
        <begin position="96"/>
        <end position="191"/>
    </location>
</feature>
<feature type="region of interest" description="Disordered" evidence="4">
    <location>
        <begin position="276"/>
        <end position="416"/>
    </location>
</feature>
<feature type="region of interest" description="Disordered" evidence="4">
    <location>
        <begin position="455"/>
        <end position="480"/>
    </location>
</feature>
<feature type="region of interest" description="Disordered" evidence="4">
    <location>
        <begin position="617"/>
        <end position="710"/>
    </location>
</feature>
<feature type="region of interest" description="Disordered" evidence="4">
    <location>
        <begin position="723"/>
        <end position="762"/>
    </location>
</feature>
<feature type="compositionally biased region" description="Low complexity" evidence="4">
    <location>
        <begin position="7"/>
        <end position="30"/>
    </location>
</feature>
<feature type="compositionally biased region" description="Low complexity" evidence="4">
    <location>
        <begin position="37"/>
        <end position="66"/>
    </location>
</feature>
<feature type="compositionally biased region" description="Basic and acidic residues" evidence="4">
    <location>
        <begin position="121"/>
        <end position="136"/>
    </location>
</feature>
<feature type="compositionally biased region" description="Low complexity" evidence="4">
    <location>
        <begin position="159"/>
        <end position="191"/>
    </location>
</feature>
<feature type="compositionally biased region" description="Low complexity" evidence="4">
    <location>
        <begin position="281"/>
        <end position="342"/>
    </location>
</feature>
<feature type="compositionally biased region" description="Polar residues" evidence="4">
    <location>
        <begin position="343"/>
        <end position="361"/>
    </location>
</feature>
<feature type="compositionally biased region" description="Low complexity" evidence="4">
    <location>
        <begin position="362"/>
        <end position="416"/>
    </location>
</feature>
<feature type="compositionally biased region" description="Low complexity" evidence="4">
    <location>
        <begin position="617"/>
        <end position="685"/>
    </location>
</feature>
<feature type="compositionally biased region" description="Basic and acidic residues" evidence="4">
    <location>
        <begin position="690"/>
        <end position="710"/>
    </location>
</feature>
<feature type="compositionally biased region" description="Low complexity" evidence="4">
    <location>
        <begin position="723"/>
        <end position="735"/>
    </location>
</feature>
<feature type="compositionally biased region" description="Basic and acidic residues" evidence="4">
    <location>
        <begin position="736"/>
        <end position="748"/>
    </location>
</feature>
<feature type="compositionally biased region" description="Low complexity" evidence="4">
    <location>
        <begin position="749"/>
        <end position="762"/>
    </location>
</feature>
<feature type="active site" description="Proton acceptor" evidence="1 3">
    <location>
        <position position="963"/>
    </location>
</feature>
<feature type="binding site" evidence="1">
    <location>
        <begin position="848"/>
        <end position="856"/>
    </location>
    <ligand>
        <name>ATP</name>
        <dbReference type="ChEBI" id="CHEBI:30616"/>
    </ligand>
</feature>
<feature type="binding site" evidence="1">
    <location>
        <position position="869"/>
    </location>
    <ligand>
        <name>ATP</name>
        <dbReference type="ChEBI" id="CHEBI:30616"/>
    </ligand>
</feature>
<feature type="mutagenesis site" description="Normal kinetics of aggregation, but delayed multicellular development. Normal kinetics of aggregation, but delayed multicellular development; when associated with A-513." evidence="5">
    <original>E</original>
    <variation>G</variation>
    <location>
        <position position="512"/>
    </location>
</feature>
<feature type="mutagenesis site" description="Normal kinetics of aggregation, but delayed multicellular development; when associated with G-512." evidence="5">
    <original>N</original>
    <variation>A</variation>
    <location>
        <position position="513"/>
    </location>
</feature>
<feature type="mutagenesis site" description="Normal kinetics of aggregation, but delayed multicellular development." evidence="5">
    <original>C</original>
    <variation>A</variation>
    <location>
        <position position="553"/>
    </location>
</feature>
<feature type="mutagenesis site" description="Loss of kinase activity and increased rapidity of aggregation, but delayed multicellular development." evidence="5">
    <original>K</original>
    <variation>A</variation>
    <location>
        <position position="869"/>
    </location>
</feature>
<feature type="sequence conflict" description="In Ref. 1; AAN80747." evidence="6" ref="1">
    <location>
        <begin position="293"/>
        <end position="294"/>
    </location>
</feature>
<keyword id="KW-0067">ATP-binding</keyword>
<keyword id="KW-1003">Cell membrane</keyword>
<keyword id="KW-0963">Cytoplasm</keyword>
<keyword id="KW-0418">Kinase</keyword>
<keyword id="KW-0472">Membrane</keyword>
<keyword id="KW-0547">Nucleotide-binding</keyword>
<keyword id="KW-1185">Reference proteome</keyword>
<keyword id="KW-0723">Serine/threonine-protein kinase</keyword>
<keyword id="KW-0808">Transferase</keyword>
<proteinExistence type="evidence at protein level"/>
<sequence length="1125" mass="125492">MKTSKDSSNSNSNNNNNNNNNNNNNNNNNNGLNGTYSSKSLSPPTSPKQMSGNSIISNSTGNLSSGSGSGSSSGGNKKFINRSFNTFIDFIKKPARRNSKAHNTPPPYPEVDTGFGYFLELDSKPPKPFDEKDDPIHNSTGSTDSWEGDLNSSGGGGKQPQQTQQQSSGENLNNSSDRNNNSNENNQIVDDNSNVFNKGVVVQTVPMTEIGLFPVSLMMAQQRAEHPINVEDIESDVQTCSIPNSKPLYSSLGCSTNSSNSGSSISAPNITFQSFGISPVNNNNNNNNNSNNNSNSNSNSNSNSNNNNNNNNNNNNNNNNNNNNNNNNNSTVNSNNSSLNNSPRYLNSSSSPRSMQHLSSKITTTTTTTTTTTTTTSDDNNGNTNNNISNNNNIINNSNNNSNSNNNNNNNINNTNHKFKTMEKYFSSKENFPIPFPKLKDELGVIIENSSNKGYVGGNKGSEDRRKKIEQKKKQVPAPEMKATKEKFIETITDPTTLNSFRSFMENTQSNENLEFFLEVKRFNTIQDQVLLKHTCDDIWRRFFDDLAVTQLCVESSLKKLINNRRENPTHSMFNEVLDLLLDDIVCDAFRNYISSPFNPEWKSEFKKKFTNNTYSTTTQPINNFNNTNNNNNNNCSTPPNNYSSSPIKQSNINNNNNNASSSNIASSSNVNNNNNNSNGSNTSSSHHRERLDNIKGNRERVDSNGKERSIDNKDILSLLESNLSNHSNSSSNSNGKDKDKDKDKNENTTDNSNNNNNSNNNLNNLIIKNNFNNILQSPQIVSKINEIFKDSNNSQLSISITLDNDEDPTIFHLDESDMESLIEEVVKDNISVHTEISYSDVSIHKWIASGSSGRVYNGQYKGKDVAIKVLGPEVCVHFDLNEFKREVALMSIFKHDNLARCLGAGQYDDKYFHLTEYCHNGSLFSYLRDQRNNISFGQRLHFALGIARGMRYLHSMSIIHRDLKSMNILLTKRLKIKIVDFGTSRVANKYNMTTHVGTQAWMAPEIFTSRTYTNKVDVYSYAIILFEIFTRKSAYDENANINIPNMVMKGERPELPKDMQTSISNIIKKCWQQKPSNRPSFIKIVAYLESIIYPSVSNSLGLVASTSFSSSALWSGQILAQPKN</sequence>
<comment type="function">
    <text>Serine/threonine kinase involved in negative regulation of chemotaxis.</text>
</comment>
<comment type="catalytic activity">
    <reaction>
        <text>L-seryl-[protein] + ATP = O-phospho-L-seryl-[protein] + ADP + H(+)</text>
        <dbReference type="Rhea" id="RHEA:17989"/>
        <dbReference type="Rhea" id="RHEA-COMP:9863"/>
        <dbReference type="Rhea" id="RHEA-COMP:11604"/>
        <dbReference type="ChEBI" id="CHEBI:15378"/>
        <dbReference type="ChEBI" id="CHEBI:29999"/>
        <dbReference type="ChEBI" id="CHEBI:30616"/>
        <dbReference type="ChEBI" id="CHEBI:83421"/>
        <dbReference type="ChEBI" id="CHEBI:456216"/>
        <dbReference type="EC" id="2.7.11.1"/>
    </reaction>
</comment>
<comment type="catalytic activity">
    <reaction>
        <text>L-threonyl-[protein] + ATP = O-phospho-L-threonyl-[protein] + ADP + H(+)</text>
        <dbReference type="Rhea" id="RHEA:46608"/>
        <dbReference type="Rhea" id="RHEA-COMP:11060"/>
        <dbReference type="Rhea" id="RHEA-COMP:11605"/>
        <dbReference type="ChEBI" id="CHEBI:15378"/>
        <dbReference type="ChEBI" id="CHEBI:30013"/>
        <dbReference type="ChEBI" id="CHEBI:30616"/>
        <dbReference type="ChEBI" id="CHEBI:61977"/>
        <dbReference type="ChEBI" id="CHEBI:456216"/>
        <dbReference type="EC" id="2.7.11.1"/>
    </reaction>
</comment>
<comment type="activity regulation">
    <text evidence="5">Up-regulated by cAMP.</text>
</comment>
<comment type="subcellular location">
    <subcellularLocation>
        <location evidence="5">Cytoplasm</location>
    </subcellularLocation>
    <subcellularLocation>
        <location evidence="5">Cell membrane</location>
    </subcellularLocation>
    <text>Translocates very rapidly to the plasma membrane upon stimulation by chemoattractant, but no polarized localization to the leading edge in aggregating cells.</text>
</comment>
<comment type="developmental stage">
    <text evidence="5">Very low expression in vegetative cells, but increases dramatically at 4 hours after starvation and then rapidly falls to very low levels throughout the remainder of development.</text>
</comment>
<comment type="domain">
    <text>The RGS domain is involved in translocation to the plasma membrane.</text>
</comment>
<comment type="PTM">
    <text evidence="5">Autophosphorylated.</text>
</comment>
<comment type="miscellaneous">
    <text>RckA kinase activity remains elevated unless the stimulus is removed and the kinase function is directly involved in delocalizing the protein from the plasma membrane. However, the membrane localization does not require a functional kinase domain and seems not to be essential for the kinase activation.</text>
</comment>
<comment type="similarity">
    <text evidence="6">Belongs to the protein kinase superfamily. TKL Ser/Thr protein kinase family.</text>
</comment>
<organism>
    <name type="scientific">Dictyostelium discoideum</name>
    <name type="common">Social amoeba</name>
    <dbReference type="NCBI Taxonomy" id="44689"/>
    <lineage>
        <taxon>Eukaryota</taxon>
        <taxon>Amoebozoa</taxon>
        <taxon>Evosea</taxon>
        <taxon>Eumycetozoa</taxon>
        <taxon>Dictyostelia</taxon>
        <taxon>Dictyosteliales</taxon>
        <taxon>Dictyosteliaceae</taxon>
        <taxon>Dictyostelium</taxon>
    </lineage>
</organism>
<evidence type="ECO:0000255" key="1">
    <source>
        <dbReference type="PROSITE-ProRule" id="PRU00159"/>
    </source>
</evidence>
<evidence type="ECO:0000255" key="2">
    <source>
        <dbReference type="PROSITE-ProRule" id="PRU00171"/>
    </source>
</evidence>
<evidence type="ECO:0000255" key="3">
    <source>
        <dbReference type="PROSITE-ProRule" id="PRU10027"/>
    </source>
</evidence>
<evidence type="ECO:0000256" key="4">
    <source>
        <dbReference type="SAM" id="MobiDB-lite"/>
    </source>
</evidence>
<evidence type="ECO:0000269" key="5">
    <source>
    </source>
</evidence>
<evidence type="ECO:0000305" key="6"/>
<protein>
    <recommendedName>
        <fullName>RGS domain-containing serine/threonine-protein kinase A</fullName>
        <ecNumber>2.7.11.1</ecNumber>
    </recommendedName>
    <alternativeName>
        <fullName>RGS domain-containing serine/threonine-protein kinase 1</fullName>
    </alternativeName>
</protein>
<reference key="1">
    <citation type="journal article" date="2003" name="Mol. Biol. Cell">
        <title>A regulator of G protein signaling-containing kinase is important for chemotaxis and multicellular development in dictyostelium.</title>
        <authorList>
            <person name="Sun B."/>
            <person name="Firtel R.A."/>
        </authorList>
    </citation>
    <scope>NUCLEOTIDE SEQUENCE [MRNA]</scope>
    <scope>CHARACTERIZATION</scope>
    <scope>DEVELOPMENTAL STAGE</scope>
    <scope>ACTIVITY REGULATION</scope>
    <scope>MUTAGENESIS OF GLU-512; ASN-513; CYS-553 AND LYS-869</scope>
    <scope>SUBCELLULAR LOCATION</scope>
    <scope>PHOSPHORYLATION</scope>
</reference>
<reference key="2">
    <citation type="journal article" date="2005" name="Nature">
        <title>The genome of the social amoeba Dictyostelium discoideum.</title>
        <authorList>
            <person name="Eichinger L."/>
            <person name="Pachebat J.A."/>
            <person name="Gloeckner G."/>
            <person name="Rajandream M.A."/>
            <person name="Sucgang R."/>
            <person name="Berriman M."/>
            <person name="Song J."/>
            <person name="Olsen R."/>
            <person name="Szafranski K."/>
            <person name="Xu Q."/>
            <person name="Tunggal B."/>
            <person name="Kummerfeld S."/>
            <person name="Madera M."/>
            <person name="Konfortov B.A."/>
            <person name="Rivero F."/>
            <person name="Bankier A.T."/>
            <person name="Lehmann R."/>
            <person name="Hamlin N."/>
            <person name="Davies R."/>
            <person name="Gaudet P."/>
            <person name="Fey P."/>
            <person name="Pilcher K."/>
            <person name="Chen G."/>
            <person name="Saunders D."/>
            <person name="Sodergren E.J."/>
            <person name="Davis P."/>
            <person name="Kerhornou A."/>
            <person name="Nie X."/>
            <person name="Hall N."/>
            <person name="Anjard C."/>
            <person name="Hemphill L."/>
            <person name="Bason N."/>
            <person name="Farbrother P."/>
            <person name="Desany B."/>
            <person name="Just E."/>
            <person name="Morio T."/>
            <person name="Rost R."/>
            <person name="Churcher C.M."/>
            <person name="Cooper J."/>
            <person name="Haydock S."/>
            <person name="van Driessche N."/>
            <person name="Cronin A."/>
            <person name="Goodhead I."/>
            <person name="Muzny D.M."/>
            <person name="Mourier T."/>
            <person name="Pain A."/>
            <person name="Lu M."/>
            <person name="Harper D."/>
            <person name="Lindsay R."/>
            <person name="Hauser H."/>
            <person name="James K.D."/>
            <person name="Quiles M."/>
            <person name="Madan Babu M."/>
            <person name="Saito T."/>
            <person name="Buchrieser C."/>
            <person name="Wardroper A."/>
            <person name="Felder M."/>
            <person name="Thangavelu M."/>
            <person name="Johnson D."/>
            <person name="Knights A."/>
            <person name="Loulseged H."/>
            <person name="Mungall K.L."/>
            <person name="Oliver K."/>
            <person name="Price C."/>
            <person name="Quail M.A."/>
            <person name="Urushihara H."/>
            <person name="Hernandez J."/>
            <person name="Rabbinowitsch E."/>
            <person name="Steffen D."/>
            <person name="Sanders M."/>
            <person name="Ma J."/>
            <person name="Kohara Y."/>
            <person name="Sharp S."/>
            <person name="Simmonds M.N."/>
            <person name="Spiegler S."/>
            <person name="Tivey A."/>
            <person name="Sugano S."/>
            <person name="White B."/>
            <person name="Walker D."/>
            <person name="Woodward J.R."/>
            <person name="Winckler T."/>
            <person name="Tanaka Y."/>
            <person name="Shaulsky G."/>
            <person name="Schleicher M."/>
            <person name="Weinstock G.M."/>
            <person name="Rosenthal A."/>
            <person name="Cox E.C."/>
            <person name="Chisholm R.L."/>
            <person name="Gibbs R.A."/>
            <person name="Loomis W.F."/>
            <person name="Platzer M."/>
            <person name="Kay R.R."/>
            <person name="Williams J.G."/>
            <person name="Dear P.H."/>
            <person name="Noegel A.A."/>
            <person name="Barrell B.G."/>
            <person name="Kuspa A."/>
        </authorList>
    </citation>
    <scope>NUCLEOTIDE SEQUENCE [LARGE SCALE GENOMIC DNA]</scope>
    <source>
        <strain>AX4</strain>
    </source>
</reference>
<reference key="3">
    <citation type="journal article" date="2006" name="PLoS Genet.">
        <title>The dictyostelium kinome -- analysis of the protein kinases from a simple model organism.</title>
        <authorList>
            <person name="Goldberg J.M."/>
            <person name="Manning G."/>
            <person name="Liu A."/>
            <person name="Fey P."/>
            <person name="Pilcher K.E."/>
            <person name="Xu Y."/>
            <person name="Smith J.L."/>
        </authorList>
    </citation>
    <scope>GENE FAMILY</scope>
    <scope>NOMENCLATURE</scope>
</reference>
<dbReference type="EC" id="2.7.11.1"/>
<dbReference type="EMBL" id="AY163574">
    <property type="protein sequence ID" value="AAN80747.1"/>
    <property type="molecule type" value="mRNA"/>
</dbReference>
<dbReference type="EMBL" id="AAFI02000024">
    <property type="protein sequence ID" value="EAL67970.1"/>
    <property type="molecule type" value="Genomic_DNA"/>
</dbReference>
<dbReference type="RefSeq" id="XP_641978.1">
    <property type="nucleotide sequence ID" value="XM_636886.1"/>
</dbReference>
<dbReference type="SMR" id="Q54XQ2"/>
<dbReference type="FunCoup" id="Q54XQ2">
    <property type="interactions" value="595"/>
</dbReference>
<dbReference type="STRING" id="44689.Q54XQ2"/>
<dbReference type="PaxDb" id="44689-DDB0214828"/>
<dbReference type="EnsemblProtists" id="EAL67970">
    <property type="protein sequence ID" value="EAL67970"/>
    <property type="gene ID" value="DDB_G0278737"/>
</dbReference>
<dbReference type="GeneID" id="8621710"/>
<dbReference type="KEGG" id="ddi:DDB_G0278737"/>
<dbReference type="dictyBase" id="DDB_G0278737">
    <property type="gene designation" value="rckA"/>
</dbReference>
<dbReference type="VEuPathDB" id="AmoebaDB:DDB_G0278737"/>
<dbReference type="eggNOG" id="KOG0192">
    <property type="taxonomic scope" value="Eukaryota"/>
</dbReference>
<dbReference type="HOGENOM" id="CLU_279833_0_0_1"/>
<dbReference type="InParanoid" id="Q54XQ2"/>
<dbReference type="OMA" id="YLEIERY"/>
<dbReference type="PRO" id="PR:Q54XQ2"/>
<dbReference type="Proteomes" id="UP000002195">
    <property type="component" value="Chromosome 3"/>
</dbReference>
<dbReference type="GO" id="GO:0005938">
    <property type="term" value="C:cell cortex"/>
    <property type="evidence" value="ECO:0000314"/>
    <property type="project" value="dictyBase"/>
</dbReference>
<dbReference type="GO" id="GO:0005737">
    <property type="term" value="C:cytoplasm"/>
    <property type="evidence" value="ECO:0000314"/>
    <property type="project" value="dictyBase"/>
</dbReference>
<dbReference type="GO" id="GO:0005886">
    <property type="term" value="C:plasma membrane"/>
    <property type="evidence" value="ECO:0007669"/>
    <property type="project" value="UniProtKB-SubCell"/>
</dbReference>
<dbReference type="GO" id="GO:0005524">
    <property type="term" value="F:ATP binding"/>
    <property type="evidence" value="ECO:0007669"/>
    <property type="project" value="UniProtKB-KW"/>
</dbReference>
<dbReference type="GO" id="GO:0004672">
    <property type="term" value="F:protein kinase activity"/>
    <property type="evidence" value="ECO:0000314"/>
    <property type="project" value="dictyBase"/>
</dbReference>
<dbReference type="GO" id="GO:0106310">
    <property type="term" value="F:protein serine kinase activity"/>
    <property type="evidence" value="ECO:0007669"/>
    <property type="project" value="RHEA"/>
</dbReference>
<dbReference type="GO" id="GO:0004674">
    <property type="term" value="F:protein serine/threonine kinase activity"/>
    <property type="evidence" value="ECO:0007669"/>
    <property type="project" value="UniProtKB-KW"/>
</dbReference>
<dbReference type="GO" id="GO:0007189">
    <property type="term" value="P:adenylate cyclase-activating G protein-coupled receptor signaling pathway"/>
    <property type="evidence" value="ECO:0000315"/>
    <property type="project" value="dictyBase"/>
</dbReference>
<dbReference type="GO" id="GO:0061123">
    <property type="term" value="P:negative regulation of positive chemotaxis to cAMP"/>
    <property type="evidence" value="ECO:0000315"/>
    <property type="project" value="dictyBase"/>
</dbReference>
<dbReference type="GO" id="GO:0050921">
    <property type="term" value="P:positive regulation of chemotaxis"/>
    <property type="evidence" value="ECO:0000315"/>
    <property type="project" value="dictyBase"/>
</dbReference>
<dbReference type="GO" id="GO:0007165">
    <property type="term" value="P:signal transduction"/>
    <property type="evidence" value="ECO:0000318"/>
    <property type="project" value="GO_Central"/>
</dbReference>
<dbReference type="CDD" id="cd13999">
    <property type="entry name" value="STKc_MAP3K-like"/>
    <property type="match status" value="1"/>
</dbReference>
<dbReference type="Gene3D" id="1.10.167.10">
    <property type="entry name" value="Regulator of G-protein Signalling 4, domain 2"/>
    <property type="match status" value="1"/>
</dbReference>
<dbReference type="Gene3D" id="1.10.510.10">
    <property type="entry name" value="Transferase(Phosphotransferase) domain 1"/>
    <property type="match status" value="1"/>
</dbReference>
<dbReference type="InterPro" id="IPR011009">
    <property type="entry name" value="Kinase-like_dom_sf"/>
</dbReference>
<dbReference type="InterPro" id="IPR000719">
    <property type="entry name" value="Prot_kinase_dom"/>
</dbReference>
<dbReference type="InterPro" id="IPR016137">
    <property type="entry name" value="RGS"/>
</dbReference>
<dbReference type="InterPro" id="IPR036305">
    <property type="entry name" value="RGS_sf"/>
</dbReference>
<dbReference type="InterPro" id="IPR044926">
    <property type="entry name" value="RGS_subdomain_2"/>
</dbReference>
<dbReference type="InterPro" id="IPR001245">
    <property type="entry name" value="Ser-Thr/Tyr_kinase_cat_dom"/>
</dbReference>
<dbReference type="InterPro" id="IPR008271">
    <property type="entry name" value="Ser/Thr_kinase_AS"/>
</dbReference>
<dbReference type="InterPro" id="IPR051681">
    <property type="entry name" value="Ser/Thr_Kinases-Pseudokinases"/>
</dbReference>
<dbReference type="PANTHER" id="PTHR44329">
    <property type="entry name" value="SERINE/THREONINE-PROTEIN KINASE TNNI3K-RELATED"/>
    <property type="match status" value="1"/>
</dbReference>
<dbReference type="Pfam" id="PF07714">
    <property type="entry name" value="PK_Tyr_Ser-Thr"/>
    <property type="match status" value="1"/>
</dbReference>
<dbReference type="Pfam" id="PF00615">
    <property type="entry name" value="RGS"/>
    <property type="match status" value="1"/>
</dbReference>
<dbReference type="PRINTS" id="PR00109">
    <property type="entry name" value="TYRKINASE"/>
</dbReference>
<dbReference type="SMART" id="SM00315">
    <property type="entry name" value="RGS"/>
    <property type="match status" value="1"/>
</dbReference>
<dbReference type="SMART" id="SM00220">
    <property type="entry name" value="S_TKc"/>
    <property type="match status" value="1"/>
</dbReference>
<dbReference type="SUPFAM" id="SSF56112">
    <property type="entry name" value="Protein kinase-like (PK-like)"/>
    <property type="match status" value="1"/>
</dbReference>
<dbReference type="SUPFAM" id="SSF48097">
    <property type="entry name" value="Regulator of G-protein signaling, RGS"/>
    <property type="match status" value="1"/>
</dbReference>
<dbReference type="PROSITE" id="PS50011">
    <property type="entry name" value="PROTEIN_KINASE_DOM"/>
    <property type="match status" value="1"/>
</dbReference>
<dbReference type="PROSITE" id="PS00108">
    <property type="entry name" value="PROTEIN_KINASE_ST"/>
    <property type="match status" value="1"/>
</dbReference>
<dbReference type="PROSITE" id="PS50132">
    <property type="entry name" value="RGS"/>
    <property type="match status" value="1"/>
</dbReference>
<accession>Q54XQ2</accession>
<accession>Q8I811</accession>
<name>RCKA_DICDI</name>